<proteinExistence type="inferred from homology"/>
<protein>
    <recommendedName>
        <fullName>Thioredoxin</fullName>
        <shortName>Trx</shortName>
    </recommendedName>
    <alternativeName>
        <fullName>MPT46</fullName>
    </alternativeName>
</protein>
<comment type="function">
    <text evidence="1">Participates in various redox reactions through the reversible oxidation of its active center dithiol to a disulfide and catalyzes dithiol-disulfide exchange reactions.</text>
</comment>
<comment type="similarity">
    <text evidence="3">Belongs to the thioredoxin family.</text>
</comment>
<reference key="1">
    <citation type="journal article" date="2002" name="J. Bacteriol.">
        <title>Whole-genome comparison of Mycobacterium tuberculosis clinical and laboratory strains.</title>
        <authorList>
            <person name="Fleischmann R.D."/>
            <person name="Alland D."/>
            <person name="Eisen J.A."/>
            <person name="Carpenter L."/>
            <person name="White O."/>
            <person name="Peterson J.D."/>
            <person name="DeBoy R.T."/>
            <person name="Dodson R.J."/>
            <person name="Gwinn M.L."/>
            <person name="Haft D.H."/>
            <person name="Hickey E.K."/>
            <person name="Kolonay J.F."/>
            <person name="Nelson W.C."/>
            <person name="Umayam L.A."/>
            <person name="Ermolaeva M.D."/>
            <person name="Salzberg S.L."/>
            <person name="Delcher A."/>
            <person name="Utterback T.R."/>
            <person name="Weidman J.F."/>
            <person name="Khouri H.M."/>
            <person name="Gill J."/>
            <person name="Mikula A."/>
            <person name="Bishai W."/>
            <person name="Jacobs W.R. Jr."/>
            <person name="Venter J.C."/>
            <person name="Fraser C.M."/>
        </authorList>
    </citation>
    <scope>NUCLEOTIDE SEQUENCE [LARGE SCALE GENOMIC DNA]</scope>
    <source>
        <strain>CDC 1551 / Oshkosh</strain>
    </source>
</reference>
<keyword id="KW-1015">Disulfide bond</keyword>
<keyword id="KW-0249">Electron transport</keyword>
<keyword id="KW-0676">Redox-active center</keyword>
<keyword id="KW-1185">Reference proteome</keyword>
<keyword id="KW-0813">Transport</keyword>
<dbReference type="EMBL" id="AE000516">
    <property type="protein sequence ID" value="AAK48398.1"/>
    <property type="molecule type" value="Genomic_DNA"/>
</dbReference>
<dbReference type="PIR" id="B70851">
    <property type="entry name" value="B70851"/>
</dbReference>
<dbReference type="RefSeq" id="WP_003400164.1">
    <property type="nucleotide sequence ID" value="NZ_KK341228.1"/>
</dbReference>
<dbReference type="BMRB" id="P9WG66"/>
<dbReference type="SMR" id="P9WG66"/>
<dbReference type="GeneID" id="45427914"/>
<dbReference type="KEGG" id="mtc:MT4033"/>
<dbReference type="PATRIC" id="fig|83331.31.peg.4339"/>
<dbReference type="HOGENOM" id="CLU_090389_10_2_11"/>
<dbReference type="Proteomes" id="UP000001020">
    <property type="component" value="Chromosome"/>
</dbReference>
<dbReference type="GO" id="GO:0005829">
    <property type="term" value="C:cytosol"/>
    <property type="evidence" value="ECO:0007669"/>
    <property type="project" value="TreeGrafter"/>
</dbReference>
<dbReference type="GO" id="GO:0015035">
    <property type="term" value="F:protein-disulfide reductase activity"/>
    <property type="evidence" value="ECO:0007669"/>
    <property type="project" value="InterPro"/>
</dbReference>
<dbReference type="GO" id="GO:0045454">
    <property type="term" value="P:cell redox homeostasis"/>
    <property type="evidence" value="ECO:0007669"/>
    <property type="project" value="TreeGrafter"/>
</dbReference>
<dbReference type="CDD" id="cd02947">
    <property type="entry name" value="TRX_family"/>
    <property type="match status" value="1"/>
</dbReference>
<dbReference type="FunFam" id="3.40.30.10:FF:000001">
    <property type="entry name" value="Thioredoxin"/>
    <property type="match status" value="1"/>
</dbReference>
<dbReference type="Gene3D" id="3.40.30.10">
    <property type="entry name" value="Glutaredoxin"/>
    <property type="match status" value="1"/>
</dbReference>
<dbReference type="InterPro" id="IPR005746">
    <property type="entry name" value="Thioredoxin"/>
</dbReference>
<dbReference type="InterPro" id="IPR036249">
    <property type="entry name" value="Thioredoxin-like_sf"/>
</dbReference>
<dbReference type="InterPro" id="IPR017937">
    <property type="entry name" value="Thioredoxin_CS"/>
</dbReference>
<dbReference type="InterPro" id="IPR013766">
    <property type="entry name" value="Thioredoxin_domain"/>
</dbReference>
<dbReference type="NCBIfam" id="TIGR01068">
    <property type="entry name" value="thioredoxin"/>
    <property type="match status" value="1"/>
</dbReference>
<dbReference type="PANTHER" id="PTHR45663">
    <property type="entry name" value="GEO12009P1"/>
    <property type="match status" value="1"/>
</dbReference>
<dbReference type="PANTHER" id="PTHR45663:SF11">
    <property type="entry name" value="GEO12009P1"/>
    <property type="match status" value="1"/>
</dbReference>
<dbReference type="Pfam" id="PF00085">
    <property type="entry name" value="Thioredoxin"/>
    <property type="match status" value="1"/>
</dbReference>
<dbReference type="PIRSF" id="PIRSF000077">
    <property type="entry name" value="Thioredoxin"/>
    <property type="match status" value="1"/>
</dbReference>
<dbReference type="PRINTS" id="PR00421">
    <property type="entry name" value="THIOREDOXIN"/>
</dbReference>
<dbReference type="SUPFAM" id="SSF52833">
    <property type="entry name" value="Thioredoxin-like"/>
    <property type="match status" value="1"/>
</dbReference>
<dbReference type="PROSITE" id="PS00194">
    <property type="entry name" value="THIOREDOXIN_1"/>
    <property type="match status" value="1"/>
</dbReference>
<dbReference type="PROSITE" id="PS51352">
    <property type="entry name" value="THIOREDOXIN_2"/>
    <property type="match status" value="1"/>
</dbReference>
<evidence type="ECO:0000250" key="1"/>
<evidence type="ECO:0000255" key="2">
    <source>
        <dbReference type="PROSITE-ProRule" id="PRU00691"/>
    </source>
</evidence>
<evidence type="ECO:0000305" key="3"/>
<sequence>MTDSEKSATIKVTDASFATDVLSSNKPVLVDFWATWCGPCKMVAPVLEEIATERATDLTVAKLDVDTNPETARNFQVVSIPTLILFKDGQPVKRIVGAKGKAALLRELSDVVPNLN</sequence>
<accession>P9WG66</accession>
<accession>L0TDX8</accession>
<accession>P0A616</accession>
<accession>P52229</accession>
<feature type="initiator methionine" description="Removed" evidence="1">
    <location>
        <position position="1"/>
    </location>
</feature>
<feature type="chain" id="PRO_0000428415" description="Thioredoxin">
    <location>
        <begin position="2"/>
        <end position="116"/>
    </location>
</feature>
<feature type="domain" description="Thioredoxin" evidence="2">
    <location>
        <begin position="2"/>
        <end position="113"/>
    </location>
</feature>
<feature type="disulfide bond" description="Redox-active" evidence="2">
    <location>
        <begin position="37"/>
        <end position="40"/>
    </location>
</feature>
<name>THIO_MYCTO</name>
<organism>
    <name type="scientific">Mycobacterium tuberculosis (strain CDC 1551 / Oshkosh)</name>
    <dbReference type="NCBI Taxonomy" id="83331"/>
    <lineage>
        <taxon>Bacteria</taxon>
        <taxon>Bacillati</taxon>
        <taxon>Actinomycetota</taxon>
        <taxon>Actinomycetes</taxon>
        <taxon>Mycobacteriales</taxon>
        <taxon>Mycobacteriaceae</taxon>
        <taxon>Mycobacterium</taxon>
        <taxon>Mycobacterium tuberculosis complex</taxon>
    </lineage>
</organism>
<gene>
    <name type="primary">trxA</name>
    <name type="synonym">trx</name>
    <name type="synonym">trxC</name>
    <name type="ordered locus">MT4033</name>
</gene>